<gene>
    <name evidence="4" type="primary">pgmF</name>
    <name type="ORF">ATEG_06209</name>
</gene>
<name>PGMF_ASPTN</name>
<dbReference type="EC" id="1.-.-.-" evidence="7"/>
<dbReference type="EMBL" id="CH476601">
    <property type="protein sequence ID" value="EAU33970.1"/>
    <property type="molecule type" value="Genomic_DNA"/>
</dbReference>
<dbReference type="RefSeq" id="XP_001215387.1">
    <property type="nucleotide sequence ID" value="XM_001215387.1"/>
</dbReference>
<dbReference type="SMR" id="Q0CJC5"/>
<dbReference type="STRING" id="341663.Q0CJC5"/>
<dbReference type="EnsemblFungi" id="EAU33970">
    <property type="protein sequence ID" value="EAU33970"/>
    <property type="gene ID" value="ATEG_06209"/>
</dbReference>
<dbReference type="GeneID" id="4321478"/>
<dbReference type="VEuPathDB" id="FungiDB:ATEG_06209"/>
<dbReference type="eggNOG" id="KOG1198">
    <property type="taxonomic scope" value="Eukaryota"/>
</dbReference>
<dbReference type="HOGENOM" id="CLU_026673_3_3_1"/>
<dbReference type="OMA" id="IMIASME"/>
<dbReference type="OrthoDB" id="201656at2759"/>
<dbReference type="Proteomes" id="UP000007963">
    <property type="component" value="Unassembled WGS sequence"/>
</dbReference>
<dbReference type="GO" id="GO:0005739">
    <property type="term" value="C:mitochondrion"/>
    <property type="evidence" value="ECO:0007669"/>
    <property type="project" value="TreeGrafter"/>
</dbReference>
<dbReference type="GO" id="GO:0000166">
    <property type="term" value="F:nucleotide binding"/>
    <property type="evidence" value="ECO:0007669"/>
    <property type="project" value="UniProtKB-KW"/>
</dbReference>
<dbReference type="GO" id="GO:0016491">
    <property type="term" value="F:oxidoreductase activity"/>
    <property type="evidence" value="ECO:0007669"/>
    <property type="project" value="UniProtKB-KW"/>
</dbReference>
<dbReference type="CDD" id="cd08267">
    <property type="entry name" value="MDR1"/>
    <property type="match status" value="1"/>
</dbReference>
<dbReference type="Gene3D" id="3.90.180.10">
    <property type="entry name" value="Medium-chain alcohol dehydrogenases, catalytic domain"/>
    <property type="match status" value="1"/>
</dbReference>
<dbReference type="Gene3D" id="3.40.50.720">
    <property type="entry name" value="NAD(P)-binding Rossmann-like Domain"/>
    <property type="match status" value="1"/>
</dbReference>
<dbReference type="InterPro" id="IPR013154">
    <property type="entry name" value="ADH-like_N"/>
</dbReference>
<dbReference type="InterPro" id="IPR011032">
    <property type="entry name" value="GroES-like_sf"/>
</dbReference>
<dbReference type="InterPro" id="IPR036291">
    <property type="entry name" value="NAD(P)-bd_dom_sf"/>
</dbReference>
<dbReference type="InterPro" id="IPR020843">
    <property type="entry name" value="PKS_ER"/>
</dbReference>
<dbReference type="InterPro" id="IPR050700">
    <property type="entry name" value="YIM1/Zinc_Alcohol_DH_Fams"/>
</dbReference>
<dbReference type="PANTHER" id="PTHR11695">
    <property type="entry name" value="ALCOHOL DEHYDROGENASE RELATED"/>
    <property type="match status" value="1"/>
</dbReference>
<dbReference type="PANTHER" id="PTHR11695:SF294">
    <property type="entry name" value="RETICULON-4-INTERACTING PROTEIN 1, MITOCHONDRIAL"/>
    <property type="match status" value="1"/>
</dbReference>
<dbReference type="Pfam" id="PF08240">
    <property type="entry name" value="ADH_N"/>
    <property type="match status" value="1"/>
</dbReference>
<dbReference type="Pfam" id="PF13602">
    <property type="entry name" value="ADH_zinc_N_2"/>
    <property type="match status" value="1"/>
</dbReference>
<dbReference type="SMART" id="SM00829">
    <property type="entry name" value="PKS_ER"/>
    <property type="match status" value="1"/>
</dbReference>
<dbReference type="SUPFAM" id="SSF50129">
    <property type="entry name" value="GroES-like"/>
    <property type="match status" value="1"/>
</dbReference>
<dbReference type="SUPFAM" id="SSF51735">
    <property type="entry name" value="NAD(P)-binding Rossmann-fold domains"/>
    <property type="match status" value="1"/>
</dbReference>
<reference key="1">
    <citation type="submission" date="2005-09" db="EMBL/GenBank/DDBJ databases">
        <title>Annotation of the Aspergillus terreus NIH2624 genome.</title>
        <authorList>
            <person name="Birren B.W."/>
            <person name="Lander E.S."/>
            <person name="Galagan J.E."/>
            <person name="Nusbaum C."/>
            <person name="Devon K."/>
            <person name="Henn M."/>
            <person name="Ma L.-J."/>
            <person name="Jaffe D.B."/>
            <person name="Butler J."/>
            <person name="Alvarez P."/>
            <person name="Gnerre S."/>
            <person name="Grabherr M."/>
            <person name="Kleber M."/>
            <person name="Mauceli E.W."/>
            <person name="Brockman W."/>
            <person name="Rounsley S."/>
            <person name="Young S.K."/>
            <person name="LaButti K."/>
            <person name="Pushparaj V."/>
            <person name="DeCaprio D."/>
            <person name="Crawford M."/>
            <person name="Koehrsen M."/>
            <person name="Engels R."/>
            <person name="Montgomery P."/>
            <person name="Pearson M."/>
            <person name="Howarth C."/>
            <person name="Larson L."/>
            <person name="Luoma S."/>
            <person name="White J."/>
            <person name="Alvarado L."/>
            <person name="Kodira C.D."/>
            <person name="Zeng Q."/>
            <person name="Oleary S."/>
            <person name="Yandava C."/>
            <person name="Denning D.W."/>
            <person name="Nierman W.C."/>
            <person name="Milne T."/>
            <person name="Madden K."/>
        </authorList>
    </citation>
    <scope>NUCLEOTIDE SEQUENCE [LARGE SCALE GENOMIC DNA]</scope>
    <source>
        <strain>NIH 2624 / FGSC A1156</strain>
    </source>
</reference>
<reference key="2">
    <citation type="journal article" date="2017" name="Microorganisms">
        <title>Melanisation of Aspergillus terreus-is butyrolactone I involved in the regulation of both DOPA and DHN types of pigments in submerged culture?</title>
        <authorList>
            <person name="Palonen E.K."/>
            <person name="Raina S."/>
            <person name="Brandt A."/>
            <person name="Meriluoto J."/>
            <person name="Keshavarz T."/>
            <person name="Soini J.T."/>
        </authorList>
    </citation>
    <scope>IDENTIFICATION</scope>
    <scope>FUNCTION</scope>
    <scope>INDUCTION</scope>
    <source>
        <strain>MUCL38669</strain>
    </source>
</reference>
<reference key="3">
    <citation type="journal article" date="2022" name="Fungal Genet. Biol.">
        <title>Identification of a polyketide biosynthesis gene cluster by transcriptional regulator activation in Aspergillus terreus.</title>
        <authorList>
            <person name="Tang S."/>
            <person name="Men P."/>
            <person name="Zhang W."/>
            <person name="Li H."/>
            <person name="Li Z."/>
            <person name="Huang X."/>
            <person name="Lu X."/>
        </authorList>
    </citation>
    <scope>FUNCTION</scope>
    <scope>INDUCTION</scope>
    <scope>DISRUPTION PHENOTYPE</scope>
</reference>
<protein>
    <recommendedName>
        <fullName evidence="5">Trans-enoyl reductase pgmF</fullName>
        <ecNumber evidence="7">1.-.-.-</ecNumber>
    </recommendedName>
    <alternativeName>
        <fullName evidence="5">Pigmented naphthoquinones biosynthesis cluster protein F</fullName>
    </alternativeName>
</protein>
<keyword id="KW-0521">NADP</keyword>
<keyword id="KW-0547">Nucleotide-binding</keyword>
<keyword id="KW-0560">Oxidoreductase</keyword>
<keyword id="KW-1185">Reference proteome</keyword>
<evidence type="ECO:0000250" key="1">
    <source>
        <dbReference type="UniProtKB" id="Q9Y7D0"/>
    </source>
</evidence>
<evidence type="ECO:0000269" key="2">
    <source>
    </source>
</evidence>
<evidence type="ECO:0000269" key="3">
    <source>
    </source>
</evidence>
<evidence type="ECO:0000303" key="4">
    <source>
    </source>
</evidence>
<evidence type="ECO:0000303" key="5">
    <source>
    </source>
</evidence>
<evidence type="ECO:0000305" key="6"/>
<evidence type="ECO:0000305" key="7">
    <source>
    </source>
</evidence>
<organism>
    <name type="scientific">Aspergillus terreus (strain NIH 2624 / FGSC A1156)</name>
    <dbReference type="NCBI Taxonomy" id="341663"/>
    <lineage>
        <taxon>Eukaryota</taxon>
        <taxon>Fungi</taxon>
        <taxon>Dikarya</taxon>
        <taxon>Ascomycota</taxon>
        <taxon>Pezizomycotina</taxon>
        <taxon>Eurotiomycetes</taxon>
        <taxon>Eurotiomycetidae</taxon>
        <taxon>Eurotiales</taxon>
        <taxon>Aspergillaceae</taxon>
        <taxon>Aspergillus</taxon>
        <taxon>Aspergillus subgen. Circumdati</taxon>
    </lineage>
</organism>
<proteinExistence type="evidence at transcript level"/>
<accession>Q0CJC5</accession>
<sequence length="356" mass="38390">MASTVPSTMKAWQFSSAYPTIEANLKLNNNAPLPDGAKNLGPDQVLVKVIAAGLNPVDFKFAEIPWLGRFIVGSPSTPGMDFAGRVVATGPNTKSVAVEDLKPGQLVFGRLDSPCKFGTLAEYTIAPRKGCVAIPPGARVIETACVASVGLTAYQSIVYRLKDHAGKRVFLNGGSGGCGTFGIQIAKQMGCHVTTSCSTPNVDLCRSLGADTVIDYKKTDVIAELKKMQPFDLVVDNVGVPTDLYWAAPSFTNPGAPYVQVGALAVTPGFILGNFFKARWPGWLGGGKRPWEFMHIESNVQDYEQLGRWMQEGKLRAVVDEVFGMQDDGAVKAYQKLRTGRAKGKIIVKIDETWED</sequence>
<feature type="chain" id="PRO_0000456010" description="Trans-enoyl reductase pgmF">
    <location>
        <begin position="1"/>
        <end position="356"/>
    </location>
</feature>
<feature type="binding site" evidence="1">
    <location>
        <begin position="57"/>
        <end position="60"/>
    </location>
    <ligand>
        <name>NADP(+)</name>
        <dbReference type="ChEBI" id="CHEBI:58349"/>
    </ligand>
</feature>
<feature type="binding site" evidence="1">
    <location>
        <begin position="175"/>
        <end position="178"/>
    </location>
    <ligand>
        <name>NADP(+)</name>
        <dbReference type="ChEBI" id="CHEBI:58349"/>
    </ligand>
</feature>
<feature type="binding site" evidence="1">
    <location>
        <begin position="198"/>
        <end position="201"/>
    </location>
    <ligand>
        <name>NADP(+)</name>
        <dbReference type="ChEBI" id="CHEBI:58349"/>
    </ligand>
</feature>
<feature type="binding site" evidence="1">
    <location>
        <position position="216"/>
    </location>
    <ligand>
        <name>NADP(+)</name>
        <dbReference type="ChEBI" id="CHEBI:58349"/>
    </ligand>
</feature>
<feature type="binding site" evidence="1">
    <location>
        <begin position="261"/>
        <end position="262"/>
    </location>
    <ligand>
        <name>NADP(+)</name>
        <dbReference type="ChEBI" id="CHEBI:58349"/>
    </ligand>
</feature>
<feature type="binding site" evidence="1">
    <location>
        <begin position="342"/>
        <end position="343"/>
    </location>
    <ligand>
        <name>NADP(+)</name>
        <dbReference type="ChEBI" id="CHEBI:58349"/>
    </ligand>
</feature>
<comment type="function">
    <text evidence="2 3 7">FAD-linked oxidoreductase; part of the gene cluster that mediates the biosynthesis of pleosporalin A, ascomycone A, as well as a third cryptic naphthoquinone derived pigment, all responsible for the coloration of conidia (PubMed:28471414, PubMed:35351612). The pathway begins with the biosynthesis of the cyclized heptaketide 3-acetonyl-1,6,8-trihydroxy-2-naphthaldehyde by the NR-PKS pgmA. The C-6 hydroxyl group is further methylated by the O-methyltransferase pgmB to yield fusarubinaldehyde which is in turn oxidized by the cytochrome P450 monooxygenase pgmC at C-9. The C-1 hydroxyl group is then methylated spontaneously. Although pgmE, pgmD and pgmH are essential for the production of pleosporalin A, it is not the case for the 2 other final products and it remains difficult to assign a specific function to each enzyme. PgmF and pgmG seem not to be involved in pigment biosynthesis although they were regulated by the cluster-specific transcription factor pgmR (Probable) (PubMed:35351612).</text>
</comment>
<comment type="induction">
    <text evidence="2 3">Expression is significantly up-regulated at the end of late growth phase, in the presence of Butyrolactone I (PubMed:28471414). Expression is positively regulated by the pgm cluster-specific transcription factor pgmR (PubMed:35351612).</text>
</comment>
<comment type="disruption phenotype">
    <text evidence="3">Does not affect the production of the naphthoquinones derived pigments.</text>
</comment>
<comment type="similarity">
    <text evidence="6">Belongs to the zinc-containing alcohol dehydrogenase family.</text>
</comment>